<dbReference type="EC" id="5.3.3.2" evidence="1"/>
<dbReference type="EMBL" id="AB037666">
    <property type="protein sequence ID" value="BAB07793.1"/>
    <property type="molecule type" value="Genomic_DNA"/>
</dbReference>
<dbReference type="SMR" id="Q9KWG2"/>
<dbReference type="SABIO-RK" id="Q9KWG2"/>
<dbReference type="GO" id="GO:0005737">
    <property type="term" value="C:cytoplasm"/>
    <property type="evidence" value="ECO:0007669"/>
    <property type="project" value="UniProtKB-SubCell"/>
</dbReference>
<dbReference type="GO" id="GO:0010181">
    <property type="term" value="F:FMN binding"/>
    <property type="evidence" value="ECO:0007669"/>
    <property type="project" value="UniProtKB-UniRule"/>
</dbReference>
<dbReference type="GO" id="GO:0004452">
    <property type="term" value="F:isopentenyl-diphosphate delta-isomerase activity"/>
    <property type="evidence" value="ECO:0007669"/>
    <property type="project" value="UniProtKB-UniRule"/>
</dbReference>
<dbReference type="GO" id="GO:0000287">
    <property type="term" value="F:magnesium ion binding"/>
    <property type="evidence" value="ECO:0007669"/>
    <property type="project" value="UniProtKB-UniRule"/>
</dbReference>
<dbReference type="GO" id="GO:0070402">
    <property type="term" value="F:NADPH binding"/>
    <property type="evidence" value="ECO:0007669"/>
    <property type="project" value="UniProtKB-UniRule"/>
</dbReference>
<dbReference type="GO" id="GO:0016491">
    <property type="term" value="F:oxidoreductase activity"/>
    <property type="evidence" value="ECO:0007669"/>
    <property type="project" value="InterPro"/>
</dbReference>
<dbReference type="GO" id="GO:0008299">
    <property type="term" value="P:isoprenoid biosynthetic process"/>
    <property type="evidence" value="ECO:0007669"/>
    <property type="project" value="UniProtKB-UniRule"/>
</dbReference>
<dbReference type="CDD" id="cd02811">
    <property type="entry name" value="IDI-2_FMN"/>
    <property type="match status" value="1"/>
</dbReference>
<dbReference type="Gene3D" id="3.20.20.70">
    <property type="entry name" value="Aldolase class I"/>
    <property type="match status" value="1"/>
</dbReference>
<dbReference type="HAMAP" id="MF_00354">
    <property type="entry name" value="Idi_2"/>
    <property type="match status" value="1"/>
</dbReference>
<dbReference type="InterPro" id="IPR013785">
    <property type="entry name" value="Aldolase_TIM"/>
</dbReference>
<dbReference type="InterPro" id="IPR000262">
    <property type="entry name" value="FMN-dep_DH"/>
</dbReference>
<dbReference type="InterPro" id="IPR011179">
    <property type="entry name" value="IPdP_isomerase"/>
</dbReference>
<dbReference type="NCBIfam" id="TIGR02151">
    <property type="entry name" value="IPP_isom_2"/>
    <property type="match status" value="1"/>
</dbReference>
<dbReference type="PANTHER" id="PTHR43665">
    <property type="entry name" value="ISOPENTENYL-DIPHOSPHATE DELTA-ISOMERASE"/>
    <property type="match status" value="1"/>
</dbReference>
<dbReference type="PANTHER" id="PTHR43665:SF1">
    <property type="entry name" value="ISOPENTENYL-DIPHOSPHATE DELTA-ISOMERASE"/>
    <property type="match status" value="1"/>
</dbReference>
<dbReference type="Pfam" id="PF01070">
    <property type="entry name" value="FMN_dh"/>
    <property type="match status" value="1"/>
</dbReference>
<dbReference type="PIRSF" id="PIRSF003314">
    <property type="entry name" value="IPP_isomerase"/>
    <property type="match status" value="1"/>
</dbReference>
<dbReference type="SUPFAM" id="SSF51395">
    <property type="entry name" value="FMN-linked oxidoreductases"/>
    <property type="match status" value="1"/>
</dbReference>
<proteinExistence type="evidence at protein level"/>
<organism>
    <name type="scientific">Streptomyces sp. (strain CL190)</name>
    <dbReference type="NCBI Taxonomy" id="93372"/>
    <lineage>
        <taxon>Bacteria</taxon>
        <taxon>Bacillati</taxon>
        <taxon>Actinomycetota</taxon>
        <taxon>Actinomycetes</taxon>
        <taxon>Kitasatosporales</taxon>
        <taxon>Streptomycetaceae</taxon>
        <taxon>Streptomyces</taxon>
    </lineage>
</organism>
<protein>
    <recommendedName>
        <fullName evidence="1">Isopentenyl-diphosphate delta-isomerase</fullName>
        <shortName evidence="1">IPP isomerase</shortName>
        <ecNumber evidence="1">5.3.3.2</ecNumber>
    </recommendedName>
    <alternativeName>
        <fullName evidence="1">Isopentenyl diphosphate:dimethylallyl diphosphate isomerase</fullName>
    </alternativeName>
    <alternativeName>
        <fullName evidence="1">Isopentenyl pyrophosphate isomerase</fullName>
    </alternativeName>
    <alternativeName>
        <fullName evidence="1">Type 2 isopentenyl diphosphate isomerase</fullName>
        <shortName evidence="1">IDI-2</shortName>
    </alternativeName>
</protein>
<name>IDI2_STRC1</name>
<comment type="function">
    <text evidence="1 2">Involved in the biosynthesis of isoprenoids. Catalyzes the 1,3-allylic rearrangement of the homoallylic substrate isopentenyl (IPP) to its allylic isomer, dimethylallyl diphosphate (DMAPP).</text>
</comment>
<comment type="catalytic activity">
    <reaction evidence="1 2">
        <text>isopentenyl diphosphate = dimethylallyl diphosphate</text>
        <dbReference type="Rhea" id="RHEA:23284"/>
        <dbReference type="ChEBI" id="CHEBI:57623"/>
        <dbReference type="ChEBI" id="CHEBI:128769"/>
        <dbReference type="EC" id="5.3.3.2"/>
    </reaction>
</comment>
<comment type="cofactor">
    <cofactor evidence="1 2">
        <name>Mg(2+)</name>
        <dbReference type="ChEBI" id="CHEBI:18420"/>
    </cofactor>
</comment>
<comment type="cofactor">
    <cofactor evidence="1 2">
        <name>FMN</name>
        <dbReference type="ChEBI" id="CHEBI:58210"/>
    </cofactor>
</comment>
<comment type="cofactor">
    <cofactor evidence="1 2">
        <name>NADPH</name>
        <dbReference type="ChEBI" id="CHEBI:57783"/>
    </cofactor>
</comment>
<comment type="subunit">
    <text evidence="1 2">Homooctamer. Dimer of tetramers.</text>
</comment>
<comment type="subcellular location">
    <subcellularLocation>
        <location evidence="1 2">Cytoplasm</location>
    </subcellularLocation>
</comment>
<comment type="similarity">
    <text evidence="1">Belongs to the IPP isomerase type 2 family.</text>
</comment>
<gene>
    <name evidence="1" type="primary">fni</name>
</gene>
<evidence type="ECO:0000255" key="1">
    <source>
        <dbReference type="HAMAP-Rule" id="MF_00354"/>
    </source>
</evidence>
<evidence type="ECO:0000269" key="2">
    <source>
    </source>
</evidence>
<accession>Q9KWG2</accession>
<sequence length="363" mass="38842">MTSAQRKDDHVRLAIEQHNAHSGRNQFDDVSFVHHALAGIDRPDVSLATSFAGISWQVPIYINAMTGGSEKTGLINRDLATAARETGVPIASGSMNAYIKDPSCADTFRVLRDENPNGFVIANINATTTVDNAQRAIDLIEANALQIHINTAQETPMPEGDRSFASWVPQIEKIAAAVDIPVIVKEVGNGLSRQTILLLADLGVQAADVSGRGGTDFARIENGRRELGDYAFLHGWGQSTAACLLDAQDISLPVLASGGVRHPLDVVRALALGARAVGSSAGFLRTLMDDGVDALITKLTTWLDQLAALQTMLGARTPADLTRCDVLLHGELRDFCADRGIDTRRLAQRSSSIEALQTTGSTR</sequence>
<reference key="1">
    <citation type="journal article" date="2000" name="J. Bacteriol.">
        <title>A gene cluster for the mevalonate pathway from Streptomyces sp. strain CL190.</title>
        <authorList>
            <person name="Takagi M."/>
            <person name="Kuzuyama T."/>
            <person name="Takahashi S."/>
            <person name="Seto H."/>
        </authorList>
    </citation>
    <scope>NUCLEOTIDE SEQUENCE [GENOMIC DNA]</scope>
</reference>
<reference key="2">
    <citation type="journal article" date="2001" name="Proc. Natl. Acad. Sci. U.S.A.">
        <title>An unusual isopentenyl diphosphate isomerase found in the mevalonate pathway gene cluster from Streptomyces sp. strain CL190.</title>
        <authorList>
            <person name="Kaneda K."/>
            <person name="Kuzuyama T."/>
            <person name="Takagi M."/>
            <person name="Hayakawa Y."/>
            <person name="Seto H."/>
        </authorList>
    </citation>
    <scope>FUNCTION</scope>
    <scope>CATALYTIC ACTIVITY</scope>
    <scope>SUBCELLULAR LOCATION</scope>
    <scope>COFACTOR</scope>
    <scope>SUBUNIT</scope>
</reference>
<feature type="chain" id="PRO_0000134429" description="Isopentenyl-diphosphate delta-isomerase">
    <location>
        <begin position="1"/>
        <end position="363"/>
    </location>
</feature>
<feature type="binding site" evidence="1">
    <location>
        <begin position="6"/>
        <end position="7"/>
    </location>
    <ligand>
        <name>substrate</name>
    </ligand>
</feature>
<feature type="binding site" evidence="1">
    <location>
        <begin position="64"/>
        <end position="66"/>
    </location>
    <ligand>
        <name>FMN</name>
        <dbReference type="ChEBI" id="CHEBI:58210"/>
    </ligand>
</feature>
<feature type="binding site" evidence="1">
    <location>
        <position position="94"/>
    </location>
    <ligand>
        <name>FMN</name>
        <dbReference type="ChEBI" id="CHEBI:58210"/>
    </ligand>
</feature>
<feature type="binding site" evidence="1">
    <location>
        <position position="123"/>
    </location>
    <ligand>
        <name>FMN</name>
        <dbReference type="ChEBI" id="CHEBI:58210"/>
    </ligand>
</feature>
<feature type="binding site" evidence="1">
    <location>
        <position position="153"/>
    </location>
    <ligand>
        <name>substrate</name>
    </ligand>
</feature>
<feature type="binding site" evidence="1">
    <location>
        <position position="154"/>
    </location>
    <ligand>
        <name>Mg(2+)</name>
        <dbReference type="ChEBI" id="CHEBI:18420"/>
    </ligand>
</feature>
<feature type="binding site" evidence="1">
    <location>
        <position position="185"/>
    </location>
    <ligand>
        <name>FMN</name>
        <dbReference type="ChEBI" id="CHEBI:58210"/>
    </ligand>
</feature>
<feature type="binding site" evidence="1">
    <location>
        <position position="210"/>
    </location>
    <ligand>
        <name>FMN</name>
        <dbReference type="ChEBI" id="CHEBI:58210"/>
    </ligand>
</feature>
<feature type="binding site" evidence="1">
    <location>
        <position position="215"/>
    </location>
    <ligand>
        <name>FMN</name>
        <dbReference type="ChEBI" id="CHEBI:58210"/>
    </ligand>
</feature>
<feature type="binding site" evidence="1">
    <location>
        <begin position="259"/>
        <end position="261"/>
    </location>
    <ligand>
        <name>FMN</name>
        <dbReference type="ChEBI" id="CHEBI:58210"/>
    </ligand>
</feature>
<feature type="binding site" evidence="1">
    <location>
        <begin position="280"/>
        <end position="281"/>
    </location>
    <ligand>
        <name>FMN</name>
        <dbReference type="ChEBI" id="CHEBI:58210"/>
    </ligand>
</feature>
<keyword id="KW-0963">Cytoplasm</keyword>
<keyword id="KW-0285">Flavoprotein</keyword>
<keyword id="KW-0288">FMN</keyword>
<keyword id="KW-0413">Isomerase</keyword>
<keyword id="KW-0414">Isoprene biosynthesis</keyword>
<keyword id="KW-0460">Magnesium</keyword>
<keyword id="KW-0479">Metal-binding</keyword>
<keyword id="KW-0521">NADP</keyword>